<proteinExistence type="inferred from homology"/>
<dbReference type="EMBL" id="AP002983">
    <property type="protein sequence ID" value="BAB33232.1"/>
    <property type="molecule type" value="Genomic_DNA"/>
</dbReference>
<dbReference type="RefSeq" id="NP_084833.1">
    <property type="nucleotide sequence ID" value="NC_002694.1"/>
</dbReference>
<dbReference type="SMR" id="Q9BBQ0"/>
<dbReference type="GeneID" id="802891"/>
<dbReference type="GO" id="GO:0009507">
    <property type="term" value="C:chloroplast"/>
    <property type="evidence" value="ECO:0007669"/>
    <property type="project" value="UniProtKB-SubCell"/>
</dbReference>
<dbReference type="GO" id="GO:0022625">
    <property type="term" value="C:cytosolic large ribosomal subunit"/>
    <property type="evidence" value="ECO:0007669"/>
    <property type="project" value="TreeGrafter"/>
</dbReference>
<dbReference type="GO" id="GO:0070180">
    <property type="term" value="F:large ribosomal subunit rRNA binding"/>
    <property type="evidence" value="ECO:0007669"/>
    <property type="project" value="TreeGrafter"/>
</dbReference>
<dbReference type="GO" id="GO:0003735">
    <property type="term" value="F:structural constituent of ribosome"/>
    <property type="evidence" value="ECO:0007669"/>
    <property type="project" value="InterPro"/>
</dbReference>
<dbReference type="GO" id="GO:0006412">
    <property type="term" value="P:translation"/>
    <property type="evidence" value="ECO:0007669"/>
    <property type="project" value="UniProtKB-UniRule"/>
</dbReference>
<dbReference type="CDD" id="cd00337">
    <property type="entry name" value="Ribosomal_uL14"/>
    <property type="match status" value="1"/>
</dbReference>
<dbReference type="FunFam" id="2.40.150.20:FF:000002">
    <property type="entry name" value="50S ribosomal protein L14, chloroplastic"/>
    <property type="match status" value="1"/>
</dbReference>
<dbReference type="Gene3D" id="2.40.150.20">
    <property type="entry name" value="Ribosomal protein L14"/>
    <property type="match status" value="1"/>
</dbReference>
<dbReference type="HAMAP" id="MF_01367">
    <property type="entry name" value="Ribosomal_uL14"/>
    <property type="match status" value="1"/>
</dbReference>
<dbReference type="InterPro" id="IPR000218">
    <property type="entry name" value="Ribosomal_uL14"/>
</dbReference>
<dbReference type="InterPro" id="IPR005745">
    <property type="entry name" value="Ribosomal_uL14_bac-type"/>
</dbReference>
<dbReference type="InterPro" id="IPR019972">
    <property type="entry name" value="Ribosomal_uL14_CS"/>
</dbReference>
<dbReference type="InterPro" id="IPR036853">
    <property type="entry name" value="Ribosomal_uL14_sf"/>
</dbReference>
<dbReference type="NCBIfam" id="TIGR01067">
    <property type="entry name" value="rplN_bact"/>
    <property type="match status" value="1"/>
</dbReference>
<dbReference type="PANTHER" id="PTHR11761">
    <property type="entry name" value="50S/60S RIBOSOMAL PROTEIN L14/L23"/>
    <property type="match status" value="1"/>
</dbReference>
<dbReference type="PANTHER" id="PTHR11761:SF27">
    <property type="entry name" value="LARGE RIBOSOMAL SUBUNIT PROTEIN UL14C"/>
    <property type="match status" value="1"/>
</dbReference>
<dbReference type="Pfam" id="PF00238">
    <property type="entry name" value="Ribosomal_L14"/>
    <property type="match status" value="1"/>
</dbReference>
<dbReference type="SMART" id="SM01374">
    <property type="entry name" value="Ribosomal_L14"/>
    <property type="match status" value="1"/>
</dbReference>
<dbReference type="SUPFAM" id="SSF50193">
    <property type="entry name" value="Ribosomal protein L14"/>
    <property type="match status" value="1"/>
</dbReference>
<dbReference type="PROSITE" id="PS00049">
    <property type="entry name" value="RIBOSOMAL_L14"/>
    <property type="match status" value="1"/>
</dbReference>
<evidence type="ECO:0000255" key="1">
    <source>
        <dbReference type="HAMAP-Rule" id="MF_01367"/>
    </source>
</evidence>
<evidence type="ECO:0000305" key="2"/>
<geneLocation type="chloroplast"/>
<reference key="1">
    <citation type="journal article" date="2000" name="DNA Res.">
        <title>Complete structure of the chloroplast genome of a legume, Lotus japonicus.</title>
        <authorList>
            <person name="Kato T."/>
            <person name="Kaneko T."/>
            <person name="Sato S."/>
            <person name="Nakamura Y."/>
            <person name="Tabata S."/>
        </authorList>
    </citation>
    <scope>NUCLEOTIDE SEQUENCE [LARGE SCALE GENOMIC DNA]</scope>
    <source>
        <strain>cv. Miyakojima MG-20</strain>
    </source>
</reference>
<accession>Q9BBQ0</accession>
<protein>
    <recommendedName>
        <fullName evidence="1">Large ribosomal subunit protein uL14c</fullName>
    </recommendedName>
    <alternativeName>
        <fullName evidence="2">50S ribosomal protein L14, chloroplastic</fullName>
    </alternativeName>
</protein>
<gene>
    <name evidence="1" type="primary">rpl14</name>
</gene>
<comment type="function">
    <text evidence="1">Binds to 23S rRNA.</text>
</comment>
<comment type="subunit">
    <text evidence="1">Part of the 50S ribosomal subunit.</text>
</comment>
<comment type="subcellular location">
    <subcellularLocation>
        <location>Plastid</location>
        <location>Chloroplast</location>
    </subcellularLocation>
</comment>
<comment type="similarity">
    <text evidence="1">Belongs to the universal ribosomal protein uL14 family.</text>
</comment>
<feature type="chain" id="PRO_0000128589" description="Large ribosomal subunit protein uL14c">
    <location>
        <begin position="1"/>
        <end position="122"/>
    </location>
</feature>
<organism>
    <name type="scientific">Lotus japonicus</name>
    <name type="common">Lotus corniculatus var. japonicus</name>
    <dbReference type="NCBI Taxonomy" id="34305"/>
    <lineage>
        <taxon>Eukaryota</taxon>
        <taxon>Viridiplantae</taxon>
        <taxon>Streptophyta</taxon>
        <taxon>Embryophyta</taxon>
        <taxon>Tracheophyta</taxon>
        <taxon>Spermatophyta</taxon>
        <taxon>Magnoliopsida</taxon>
        <taxon>eudicotyledons</taxon>
        <taxon>Gunneridae</taxon>
        <taxon>Pentapetalae</taxon>
        <taxon>rosids</taxon>
        <taxon>fabids</taxon>
        <taxon>Fabales</taxon>
        <taxon>Fabaceae</taxon>
        <taxon>Papilionoideae</taxon>
        <taxon>50 kb inversion clade</taxon>
        <taxon>NPAAA clade</taxon>
        <taxon>Hologalegina</taxon>
        <taxon>robinioid clade</taxon>
        <taxon>Loteae</taxon>
        <taxon>Lotus</taxon>
    </lineage>
</organism>
<keyword id="KW-0150">Chloroplast</keyword>
<keyword id="KW-0934">Plastid</keyword>
<keyword id="KW-0687">Ribonucleoprotein</keyword>
<keyword id="KW-0689">Ribosomal protein</keyword>
<keyword id="KW-0694">RNA-binding</keyword>
<keyword id="KW-0699">rRNA-binding</keyword>
<sequence length="122" mass="13606">MIQPQTHLNVADNSGARKLMCIRIIGASNRRYAYIGDIVVAVIKEAVPNTPLERSEVIRAVIVRTCKELKRSNGIIIQYDDNAAVVIDQEGNPKGTRIFCAIARELRQFNFTKIVSLAPEIL</sequence>
<name>RK14_LOTJA</name>